<feature type="chain" id="PRO_0000151500" description="Phosphoribosylamine--glycine ligase">
    <location>
        <begin position="1"/>
        <end position="429"/>
    </location>
</feature>
<feature type="domain" description="ATP-grasp" evidence="2">
    <location>
        <begin position="109"/>
        <end position="316"/>
    </location>
</feature>
<feature type="region of interest" description="Disordered" evidence="3">
    <location>
        <begin position="212"/>
        <end position="234"/>
    </location>
</feature>
<feature type="compositionally biased region" description="Basic and acidic residues" evidence="3">
    <location>
        <begin position="213"/>
        <end position="223"/>
    </location>
</feature>
<feature type="binding site" evidence="2">
    <location>
        <begin position="135"/>
        <end position="196"/>
    </location>
    <ligand>
        <name>ATP</name>
        <dbReference type="ChEBI" id="CHEBI:30616"/>
    </ligand>
</feature>
<feature type="binding site" evidence="2">
    <location>
        <position position="286"/>
    </location>
    <ligand>
        <name>Mg(2+)</name>
        <dbReference type="ChEBI" id="CHEBI:18420"/>
    </ligand>
</feature>
<feature type="binding site" evidence="2">
    <location>
        <position position="288"/>
    </location>
    <ligand>
        <name>Mg(2+)</name>
        <dbReference type="ChEBI" id="CHEBI:18420"/>
    </ligand>
</feature>
<proteinExistence type="inferred from homology"/>
<protein>
    <recommendedName>
        <fullName evidence="2">Phosphoribosylamine--glycine ligase</fullName>
        <ecNumber evidence="2">6.3.4.13</ecNumber>
    </recommendedName>
    <alternativeName>
        <fullName evidence="2">GARS</fullName>
    </alternativeName>
    <alternativeName>
        <fullName evidence="2">Glycinamide ribonucleotide synthetase</fullName>
    </alternativeName>
    <alternativeName>
        <fullName evidence="2">Phosphoribosylglycinamide synthetase</fullName>
    </alternativeName>
</protein>
<gene>
    <name evidence="2" type="primary">purD</name>
    <name type="ordered locus">VV3143</name>
</gene>
<keyword id="KW-0067">ATP-binding</keyword>
<keyword id="KW-0436">Ligase</keyword>
<keyword id="KW-0460">Magnesium</keyword>
<keyword id="KW-0464">Manganese</keyword>
<keyword id="KW-0479">Metal-binding</keyword>
<keyword id="KW-0547">Nucleotide-binding</keyword>
<keyword id="KW-0658">Purine biosynthesis</keyword>
<organism>
    <name type="scientific">Vibrio vulnificus (strain YJ016)</name>
    <dbReference type="NCBI Taxonomy" id="196600"/>
    <lineage>
        <taxon>Bacteria</taxon>
        <taxon>Pseudomonadati</taxon>
        <taxon>Pseudomonadota</taxon>
        <taxon>Gammaproteobacteria</taxon>
        <taxon>Vibrionales</taxon>
        <taxon>Vibrionaceae</taxon>
        <taxon>Vibrio</taxon>
    </lineage>
</organism>
<sequence>MNVLIIGSGGREHALGWKAAQNPNVETIFVAPGNAGTALEPKLENVNIAVEDIAGLVAFAKEKAIELTIVGPEVPLVLGVVDAFYEAGLPIFGPTQAAAQLEGSKAFTKDFLARHQIPTAAYANFTDIEPALAYVREQGAPIVVKADGLAAGKGVIVAMTLEEAEEAIKDMLAGNAFGEAGSRVVIEEFLDGEEASFIVMVDGENVLPMATSQDHKRVGDKDTGPNTGGMGAYSPAPVVTPEIHNRVMQEVIFPTVRGMAAEGNPYTGFLYAGLMIDKDGTPKVIEYNCRFGDPETQPIMMRMESDLVELCLAAIDKKLDQVESKWDPRASIGIVLAAGGYPAAYNKGDVISGLPQVEIEGEKVFHAGTENKGGDIVTNGGRVLCATALGNSVSEAQQRAYELAKQIRWDGMFHRNDIGYRAIAREQQK</sequence>
<name>PUR2_VIBVY</name>
<reference key="1">
    <citation type="journal article" date="2003" name="Genome Res.">
        <title>Comparative genome analysis of Vibrio vulnificus, a marine pathogen.</title>
        <authorList>
            <person name="Chen C.-Y."/>
            <person name="Wu K.-M."/>
            <person name="Chang Y.-C."/>
            <person name="Chang C.-H."/>
            <person name="Tsai H.-C."/>
            <person name="Liao T.-L."/>
            <person name="Liu Y.-M."/>
            <person name="Chen H.-J."/>
            <person name="Shen A.B.-T."/>
            <person name="Li J.-C."/>
            <person name="Su T.-L."/>
            <person name="Shao C.-P."/>
            <person name="Lee C.-T."/>
            <person name="Hor L.-I."/>
            <person name="Tsai S.-F."/>
        </authorList>
    </citation>
    <scope>NUCLEOTIDE SEQUENCE [LARGE SCALE GENOMIC DNA]</scope>
    <source>
        <strain>YJ016</strain>
    </source>
</reference>
<evidence type="ECO:0000250" key="1"/>
<evidence type="ECO:0000255" key="2">
    <source>
        <dbReference type="HAMAP-Rule" id="MF_00138"/>
    </source>
</evidence>
<evidence type="ECO:0000256" key="3">
    <source>
        <dbReference type="SAM" id="MobiDB-lite"/>
    </source>
</evidence>
<evidence type="ECO:0000305" key="4"/>
<comment type="catalytic activity">
    <reaction evidence="2">
        <text>5-phospho-beta-D-ribosylamine + glycine + ATP = N(1)-(5-phospho-beta-D-ribosyl)glycinamide + ADP + phosphate + H(+)</text>
        <dbReference type="Rhea" id="RHEA:17453"/>
        <dbReference type="ChEBI" id="CHEBI:15378"/>
        <dbReference type="ChEBI" id="CHEBI:30616"/>
        <dbReference type="ChEBI" id="CHEBI:43474"/>
        <dbReference type="ChEBI" id="CHEBI:57305"/>
        <dbReference type="ChEBI" id="CHEBI:58681"/>
        <dbReference type="ChEBI" id="CHEBI:143788"/>
        <dbReference type="ChEBI" id="CHEBI:456216"/>
        <dbReference type="EC" id="6.3.4.13"/>
    </reaction>
</comment>
<comment type="cofactor">
    <cofactor evidence="1">
        <name>Mg(2+)</name>
        <dbReference type="ChEBI" id="CHEBI:18420"/>
    </cofactor>
    <cofactor evidence="1">
        <name>Mn(2+)</name>
        <dbReference type="ChEBI" id="CHEBI:29035"/>
    </cofactor>
    <text evidence="1">Binds 1 Mg(2+) or Mn(2+) ion per subunit.</text>
</comment>
<comment type="pathway">
    <text evidence="2">Purine metabolism; IMP biosynthesis via de novo pathway; N(1)-(5-phospho-D-ribosyl)glycinamide from 5-phospho-alpha-D-ribose 1-diphosphate: step 2/2.</text>
</comment>
<comment type="similarity">
    <text evidence="2">Belongs to the GARS family.</text>
</comment>
<comment type="sequence caution" evidence="4">
    <conflict type="erroneous initiation">
        <sequence resource="EMBL-CDS" id="BAC95907"/>
    </conflict>
</comment>
<accession>Q7MGT4</accession>
<dbReference type="EC" id="6.3.4.13" evidence="2"/>
<dbReference type="EMBL" id="BA000037">
    <property type="protein sequence ID" value="BAC95907.1"/>
    <property type="status" value="ALT_INIT"/>
    <property type="molecule type" value="Genomic_DNA"/>
</dbReference>
<dbReference type="RefSeq" id="WP_039554945.1">
    <property type="nucleotide sequence ID" value="NC_005139.1"/>
</dbReference>
<dbReference type="SMR" id="Q7MGT4"/>
<dbReference type="STRING" id="672.VV93_v1c28610"/>
<dbReference type="KEGG" id="vvy:VV3143"/>
<dbReference type="eggNOG" id="COG0151">
    <property type="taxonomic scope" value="Bacteria"/>
</dbReference>
<dbReference type="HOGENOM" id="CLU_027420_3_1_6"/>
<dbReference type="UniPathway" id="UPA00074">
    <property type="reaction ID" value="UER00125"/>
</dbReference>
<dbReference type="Proteomes" id="UP000002675">
    <property type="component" value="Chromosome I"/>
</dbReference>
<dbReference type="GO" id="GO:0005524">
    <property type="term" value="F:ATP binding"/>
    <property type="evidence" value="ECO:0007669"/>
    <property type="project" value="UniProtKB-KW"/>
</dbReference>
<dbReference type="GO" id="GO:0046872">
    <property type="term" value="F:metal ion binding"/>
    <property type="evidence" value="ECO:0007669"/>
    <property type="project" value="UniProtKB-KW"/>
</dbReference>
<dbReference type="GO" id="GO:0004637">
    <property type="term" value="F:phosphoribosylamine-glycine ligase activity"/>
    <property type="evidence" value="ECO:0007669"/>
    <property type="project" value="UniProtKB-UniRule"/>
</dbReference>
<dbReference type="GO" id="GO:0006189">
    <property type="term" value="P:'de novo' IMP biosynthetic process"/>
    <property type="evidence" value="ECO:0007669"/>
    <property type="project" value="UniProtKB-UniRule"/>
</dbReference>
<dbReference type="GO" id="GO:0009113">
    <property type="term" value="P:purine nucleobase biosynthetic process"/>
    <property type="evidence" value="ECO:0007669"/>
    <property type="project" value="InterPro"/>
</dbReference>
<dbReference type="FunFam" id="3.30.470.20:FF:000031">
    <property type="entry name" value="Phosphoribosylamine--glycine ligase"/>
    <property type="match status" value="1"/>
</dbReference>
<dbReference type="FunFam" id="3.40.50.20:FF:000006">
    <property type="entry name" value="Phosphoribosylamine--glycine ligase, chloroplastic"/>
    <property type="match status" value="1"/>
</dbReference>
<dbReference type="FunFam" id="3.30.1490.20:FF:000006">
    <property type="entry name" value="phosphoribosylamine--glycine ligase, chloroplastic-like"/>
    <property type="match status" value="1"/>
</dbReference>
<dbReference type="FunFam" id="3.90.600.10:FF:000001">
    <property type="entry name" value="Trifunctional purine biosynthetic protein adenosine-3"/>
    <property type="match status" value="1"/>
</dbReference>
<dbReference type="Gene3D" id="3.40.50.20">
    <property type="match status" value="1"/>
</dbReference>
<dbReference type="Gene3D" id="3.30.1490.20">
    <property type="entry name" value="ATP-grasp fold, A domain"/>
    <property type="match status" value="1"/>
</dbReference>
<dbReference type="Gene3D" id="3.30.470.20">
    <property type="entry name" value="ATP-grasp fold, B domain"/>
    <property type="match status" value="1"/>
</dbReference>
<dbReference type="Gene3D" id="3.90.600.10">
    <property type="entry name" value="Phosphoribosylglycinamide synthetase, C-terminal domain"/>
    <property type="match status" value="1"/>
</dbReference>
<dbReference type="HAMAP" id="MF_00138">
    <property type="entry name" value="GARS"/>
    <property type="match status" value="1"/>
</dbReference>
<dbReference type="InterPro" id="IPR011761">
    <property type="entry name" value="ATP-grasp"/>
</dbReference>
<dbReference type="InterPro" id="IPR013815">
    <property type="entry name" value="ATP_grasp_subdomain_1"/>
</dbReference>
<dbReference type="InterPro" id="IPR016185">
    <property type="entry name" value="PreATP-grasp_dom_sf"/>
</dbReference>
<dbReference type="InterPro" id="IPR020561">
    <property type="entry name" value="PRibGlycinamid_synth_ATP-grasp"/>
</dbReference>
<dbReference type="InterPro" id="IPR000115">
    <property type="entry name" value="PRibGlycinamide_synth"/>
</dbReference>
<dbReference type="InterPro" id="IPR020560">
    <property type="entry name" value="PRibGlycinamide_synth_C-dom"/>
</dbReference>
<dbReference type="InterPro" id="IPR037123">
    <property type="entry name" value="PRibGlycinamide_synth_C_sf"/>
</dbReference>
<dbReference type="InterPro" id="IPR020559">
    <property type="entry name" value="PRibGlycinamide_synth_CS"/>
</dbReference>
<dbReference type="InterPro" id="IPR020562">
    <property type="entry name" value="PRibGlycinamide_synth_N"/>
</dbReference>
<dbReference type="InterPro" id="IPR011054">
    <property type="entry name" value="Rudment_hybrid_motif"/>
</dbReference>
<dbReference type="NCBIfam" id="TIGR00877">
    <property type="entry name" value="purD"/>
    <property type="match status" value="1"/>
</dbReference>
<dbReference type="PANTHER" id="PTHR43472">
    <property type="entry name" value="PHOSPHORIBOSYLAMINE--GLYCINE LIGASE"/>
    <property type="match status" value="1"/>
</dbReference>
<dbReference type="PANTHER" id="PTHR43472:SF1">
    <property type="entry name" value="PHOSPHORIBOSYLAMINE--GLYCINE LIGASE, CHLOROPLASTIC"/>
    <property type="match status" value="1"/>
</dbReference>
<dbReference type="Pfam" id="PF01071">
    <property type="entry name" value="GARS_A"/>
    <property type="match status" value="1"/>
</dbReference>
<dbReference type="Pfam" id="PF02843">
    <property type="entry name" value="GARS_C"/>
    <property type="match status" value="1"/>
</dbReference>
<dbReference type="Pfam" id="PF02844">
    <property type="entry name" value="GARS_N"/>
    <property type="match status" value="1"/>
</dbReference>
<dbReference type="SMART" id="SM01209">
    <property type="entry name" value="GARS_A"/>
    <property type="match status" value="1"/>
</dbReference>
<dbReference type="SMART" id="SM01210">
    <property type="entry name" value="GARS_C"/>
    <property type="match status" value="1"/>
</dbReference>
<dbReference type="SUPFAM" id="SSF56059">
    <property type="entry name" value="Glutathione synthetase ATP-binding domain-like"/>
    <property type="match status" value="1"/>
</dbReference>
<dbReference type="SUPFAM" id="SSF52440">
    <property type="entry name" value="PreATP-grasp domain"/>
    <property type="match status" value="1"/>
</dbReference>
<dbReference type="SUPFAM" id="SSF51246">
    <property type="entry name" value="Rudiment single hybrid motif"/>
    <property type="match status" value="1"/>
</dbReference>
<dbReference type="PROSITE" id="PS50975">
    <property type="entry name" value="ATP_GRASP"/>
    <property type="match status" value="1"/>
</dbReference>
<dbReference type="PROSITE" id="PS00184">
    <property type="entry name" value="GARS"/>
    <property type="match status" value="1"/>
</dbReference>